<feature type="chain" id="PRO_0000131357" description="Large ribosomal subunit protein uL18">
    <location>
        <begin position="1"/>
        <end position="118"/>
    </location>
</feature>
<feature type="region of interest" description="Disordered" evidence="2">
    <location>
        <begin position="1"/>
        <end position="25"/>
    </location>
</feature>
<feature type="compositionally biased region" description="Basic residues" evidence="2">
    <location>
        <begin position="10"/>
        <end position="20"/>
    </location>
</feature>
<comment type="function">
    <text evidence="1">This is one of the proteins that bind and probably mediate the attachment of the 5S RNA into the large ribosomal subunit, where it forms part of the central protuberance.</text>
</comment>
<comment type="subunit">
    <text evidence="1">Part of the 50S ribosomal subunit; part of the 5S rRNA/L5/L18/L25 subcomplex. Contacts the 5S and 23S rRNAs.</text>
</comment>
<comment type="similarity">
    <text evidence="1">Belongs to the universal ribosomal protein uL18 family.</text>
</comment>
<dbReference type="EMBL" id="AE005672">
    <property type="protein sequence ID" value="AAK74406.1"/>
    <property type="molecule type" value="Genomic_DNA"/>
</dbReference>
<dbReference type="PIR" id="E95026">
    <property type="entry name" value="E95026"/>
</dbReference>
<dbReference type="PIR" id="E97897">
    <property type="entry name" value="E97897"/>
</dbReference>
<dbReference type="RefSeq" id="WP_000624044.1">
    <property type="nucleotide sequence ID" value="NZ_CP155539.1"/>
</dbReference>
<dbReference type="SMR" id="Q97SU6"/>
<dbReference type="PaxDb" id="170187-SP_0226"/>
<dbReference type="EnsemblBacteria" id="AAK74406">
    <property type="protein sequence ID" value="AAK74406"/>
    <property type="gene ID" value="SP_0226"/>
</dbReference>
<dbReference type="GeneID" id="93738973"/>
<dbReference type="KEGG" id="spn:SP_0226"/>
<dbReference type="eggNOG" id="COG0256">
    <property type="taxonomic scope" value="Bacteria"/>
</dbReference>
<dbReference type="PhylomeDB" id="Q97SU6"/>
<dbReference type="BioCyc" id="SPNE170187:G1FZB-230-MONOMER"/>
<dbReference type="Proteomes" id="UP000000585">
    <property type="component" value="Chromosome"/>
</dbReference>
<dbReference type="GO" id="GO:0022625">
    <property type="term" value="C:cytosolic large ribosomal subunit"/>
    <property type="evidence" value="ECO:0007669"/>
    <property type="project" value="TreeGrafter"/>
</dbReference>
<dbReference type="GO" id="GO:0008097">
    <property type="term" value="F:5S rRNA binding"/>
    <property type="evidence" value="ECO:0007669"/>
    <property type="project" value="TreeGrafter"/>
</dbReference>
<dbReference type="GO" id="GO:0003735">
    <property type="term" value="F:structural constituent of ribosome"/>
    <property type="evidence" value="ECO:0007669"/>
    <property type="project" value="InterPro"/>
</dbReference>
<dbReference type="GO" id="GO:0006412">
    <property type="term" value="P:translation"/>
    <property type="evidence" value="ECO:0007669"/>
    <property type="project" value="UniProtKB-UniRule"/>
</dbReference>
<dbReference type="CDD" id="cd00432">
    <property type="entry name" value="Ribosomal_L18_L5e"/>
    <property type="match status" value="1"/>
</dbReference>
<dbReference type="FunFam" id="3.30.420.100:FF:000001">
    <property type="entry name" value="50S ribosomal protein L18"/>
    <property type="match status" value="1"/>
</dbReference>
<dbReference type="Gene3D" id="3.30.420.100">
    <property type="match status" value="1"/>
</dbReference>
<dbReference type="HAMAP" id="MF_01337_B">
    <property type="entry name" value="Ribosomal_uL18_B"/>
    <property type="match status" value="1"/>
</dbReference>
<dbReference type="InterPro" id="IPR004389">
    <property type="entry name" value="Ribosomal_uL18_bac-type"/>
</dbReference>
<dbReference type="InterPro" id="IPR005484">
    <property type="entry name" value="Ribosomal_uL18_bac/euk"/>
</dbReference>
<dbReference type="NCBIfam" id="TIGR00060">
    <property type="entry name" value="L18_bact"/>
    <property type="match status" value="1"/>
</dbReference>
<dbReference type="PANTHER" id="PTHR12899">
    <property type="entry name" value="39S RIBOSOMAL PROTEIN L18, MITOCHONDRIAL"/>
    <property type="match status" value="1"/>
</dbReference>
<dbReference type="PANTHER" id="PTHR12899:SF3">
    <property type="entry name" value="LARGE RIBOSOMAL SUBUNIT PROTEIN UL18M"/>
    <property type="match status" value="1"/>
</dbReference>
<dbReference type="Pfam" id="PF00861">
    <property type="entry name" value="Ribosomal_L18p"/>
    <property type="match status" value="1"/>
</dbReference>
<dbReference type="SUPFAM" id="SSF53137">
    <property type="entry name" value="Translational machinery components"/>
    <property type="match status" value="1"/>
</dbReference>
<protein>
    <recommendedName>
        <fullName evidence="1">Large ribosomal subunit protein uL18</fullName>
    </recommendedName>
    <alternativeName>
        <fullName evidence="3">50S ribosomal protein L18</fullName>
    </alternativeName>
</protein>
<proteinExistence type="inferred from homology"/>
<evidence type="ECO:0000255" key="1">
    <source>
        <dbReference type="HAMAP-Rule" id="MF_01337"/>
    </source>
</evidence>
<evidence type="ECO:0000256" key="2">
    <source>
        <dbReference type="SAM" id="MobiDB-lite"/>
    </source>
</evidence>
<evidence type="ECO:0000305" key="3"/>
<gene>
    <name evidence="1" type="primary">rplR</name>
    <name type="ordered locus">SP_0226</name>
</gene>
<sequence length="118" mass="12867">MISKPDKNKLRQKRHRRVRGKLSGTADRPRLNVFRSNTGIYAQVIDDVAGVTLASASTLDKEVSKGTKTEQAVAVGKLVAERANAKGISEVVFDRGGYLYHGRVKALADAARENGLKF</sequence>
<accession>Q97SU6</accession>
<reference key="1">
    <citation type="journal article" date="2001" name="Science">
        <title>Complete genome sequence of a virulent isolate of Streptococcus pneumoniae.</title>
        <authorList>
            <person name="Tettelin H."/>
            <person name="Nelson K.E."/>
            <person name="Paulsen I.T."/>
            <person name="Eisen J.A."/>
            <person name="Read T.D."/>
            <person name="Peterson S.N."/>
            <person name="Heidelberg J.F."/>
            <person name="DeBoy R.T."/>
            <person name="Haft D.H."/>
            <person name="Dodson R.J."/>
            <person name="Durkin A.S."/>
            <person name="Gwinn M.L."/>
            <person name="Kolonay J.F."/>
            <person name="Nelson W.C."/>
            <person name="Peterson J.D."/>
            <person name="Umayam L.A."/>
            <person name="White O."/>
            <person name="Salzberg S.L."/>
            <person name="Lewis M.R."/>
            <person name="Radune D."/>
            <person name="Holtzapple E.K."/>
            <person name="Khouri H.M."/>
            <person name="Wolf A.M."/>
            <person name="Utterback T.R."/>
            <person name="Hansen C.L."/>
            <person name="McDonald L.A."/>
            <person name="Feldblyum T.V."/>
            <person name="Angiuoli S.V."/>
            <person name="Dickinson T."/>
            <person name="Hickey E.K."/>
            <person name="Holt I.E."/>
            <person name="Loftus B.J."/>
            <person name="Yang F."/>
            <person name="Smith H.O."/>
            <person name="Venter J.C."/>
            <person name="Dougherty B.A."/>
            <person name="Morrison D.A."/>
            <person name="Hollingshead S.K."/>
            <person name="Fraser C.M."/>
        </authorList>
    </citation>
    <scope>NUCLEOTIDE SEQUENCE [LARGE SCALE GENOMIC DNA]</scope>
    <source>
        <strain>ATCC BAA-334 / TIGR4</strain>
    </source>
</reference>
<organism>
    <name type="scientific">Streptococcus pneumoniae serotype 4 (strain ATCC BAA-334 / TIGR4)</name>
    <dbReference type="NCBI Taxonomy" id="170187"/>
    <lineage>
        <taxon>Bacteria</taxon>
        <taxon>Bacillati</taxon>
        <taxon>Bacillota</taxon>
        <taxon>Bacilli</taxon>
        <taxon>Lactobacillales</taxon>
        <taxon>Streptococcaceae</taxon>
        <taxon>Streptococcus</taxon>
    </lineage>
</organism>
<keyword id="KW-1185">Reference proteome</keyword>
<keyword id="KW-0687">Ribonucleoprotein</keyword>
<keyword id="KW-0689">Ribosomal protein</keyword>
<keyword id="KW-0694">RNA-binding</keyword>
<keyword id="KW-0699">rRNA-binding</keyword>
<name>RL18_STRPN</name>